<proteinExistence type="inferred from homology"/>
<accession>A4FPT1</accession>
<protein>
    <recommendedName>
        <fullName evidence="1">NADH-quinone oxidoreductase subunit K</fullName>
        <ecNumber evidence="1">7.1.1.-</ecNumber>
    </recommendedName>
    <alternativeName>
        <fullName evidence="1">NADH dehydrogenase I subunit K</fullName>
    </alternativeName>
    <alternativeName>
        <fullName evidence="1">NDH-1 subunit K</fullName>
    </alternativeName>
</protein>
<feature type="chain" id="PRO_0000390215" description="NADH-quinone oxidoreductase subunit K">
    <location>
        <begin position="1"/>
        <end position="99"/>
    </location>
</feature>
<feature type="transmembrane region" description="Helical" evidence="1">
    <location>
        <begin position="3"/>
        <end position="23"/>
    </location>
</feature>
<feature type="transmembrane region" description="Helical" evidence="1">
    <location>
        <begin position="28"/>
        <end position="48"/>
    </location>
</feature>
<feature type="transmembrane region" description="Helical" evidence="1">
    <location>
        <begin position="59"/>
        <end position="79"/>
    </location>
</feature>
<dbReference type="EC" id="7.1.1.-" evidence="1"/>
<dbReference type="EMBL" id="AM420293">
    <property type="protein sequence ID" value="CAM06056.1"/>
    <property type="molecule type" value="Genomic_DNA"/>
</dbReference>
<dbReference type="RefSeq" id="WP_009944061.1">
    <property type="nucleotide sequence ID" value="NC_009142.1"/>
</dbReference>
<dbReference type="SMR" id="A4FPT1"/>
<dbReference type="STRING" id="405948.SACE_6892"/>
<dbReference type="KEGG" id="sen:SACE_6892"/>
<dbReference type="eggNOG" id="COG0713">
    <property type="taxonomic scope" value="Bacteria"/>
</dbReference>
<dbReference type="HOGENOM" id="CLU_144724_0_0_11"/>
<dbReference type="OrthoDB" id="9810120at2"/>
<dbReference type="Proteomes" id="UP000006728">
    <property type="component" value="Chromosome"/>
</dbReference>
<dbReference type="GO" id="GO:0030964">
    <property type="term" value="C:NADH dehydrogenase complex"/>
    <property type="evidence" value="ECO:0007669"/>
    <property type="project" value="TreeGrafter"/>
</dbReference>
<dbReference type="GO" id="GO:0005886">
    <property type="term" value="C:plasma membrane"/>
    <property type="evidence" value="ECO:0007669"/>
    <property type="project" value="UniProtKB-SubCell"/>
</dbReference>
<dbReference type="GO" id="GO:0050136">
    <property type="term" value="F:NADH:ubiquinone reductase (non-electrogenic) activity"/>
    <property type="evidence" value="ECO:0007669"/>
    <property type="project" value="UniProtKB-UniRule"/>
</dbReference>
<dbReference type="GO" id="GO:0048038">
    <property type="term" value="F:quinone binding"/>
    <property type="evidence" value="ECO:0007669"/>
    <property type="project" value="UniProtKB-KW"/>
</dbReference>
<dbReference type="GO" id="GO:0042773">
    <property type="term" value="P:ATP synthesis coupled electron transport"/>
    <property type="evidence" value="ECO:0007669"/>
    <property type="project" value="InterPro"/>
</dbReference>
<dbReference type="FunFam" id="1.10.287.3510:FF:000001">
    <property type="entry name" value="NADH-quinone oxidoreductase subunit K"/>
    <property type="match status" value="1"/>
</dbReference>
<dbReference type="Gene3D" id="1.10.287.3510">
    <property type="match status" value="1"/>
</dbReference>
<dbReference type="HAMAP" id="MF_01456">
    <property type="entry name" value="NDH1_NuoK"/>
    <property type="match status" value="1"/>
</dbReference>
<dbReference type="InterPro" id="IPR001133">
    <property type="entry name" value="NADH_UbQ_OxRdtase_chain4L/K"/>
</dbReference>
<dbReference type="InterPro" id="IPR039428">
    <property type="entry name" value="NUOK/Mnh_C1-like"/>
</dbReference>
<dbReference type="NCBIfam" id="NF004320">
    <property type="entry name" value="PRK05715.1-2"/>
    <property type="match status" value="1"/>
</dbReference>
<dbReference type="NCBIfam" id="NF004321">
    <property type="entry name" value="PRK05715.1-3"/>
    <property type="match status" value="1"/>
</dbReference>
<dbReference type="PANTHER" id="PTHR11434:SF21">
    <property type="entry name" value="NADH DEHYDROGENASE SUBUNIT 4L-RELATED"/>
    <property type="match status" value="1"/>
</dbReference>
<dbReference type="PANTHER" id="PTHR11434">
    <property type="entry name" value="NADH-UBIQUINONE OXIDOREDUCTASE SUBUNIT ND4L"/>
    <property type="match status" value="1"/>
</dbReference>
<dbReference type="Pfam" id="PF00420">
    <property type="entry name" value="Oxidored_q2"/>
    <property type="match status" value="1"/>
</dbReference>
<sequence>MTPTYYLLLSALLFSIGAVGVLVRRNAIVVFMCVELMLNAVNLTLVTFARINGSVDGQVMAFFVMVVAAAEVVVGLAIIMSIFRTRRSASVDDANLLKY</sequence>
<reference key="1">
    <citation type="journal article" date="2007" name="Nat. Biotechnol.">
        <title>Complete genome sequence of the erythromycin-producing bacterium Saccharopolyspora erythraea NRRL23338.</title>
        <authorList>
            <person name="Oliynyk M."/>
            <person name="Samborskyy M."/>
            <person name="Lester J.B."/>
            <person name="Mironenko T."/>
            <person name="Scott N."/>
            <person name="Dickens S."/>
            <person name="Haydock S.F."/>
            <person name="Leadlay P.F."/>
        </authorList>
    </citation>
    <scope>NUCLEOTIDE SEQUENCE [LARGE SCALE GENOMIC DNA]</scope>
    <source>
        <strain>ATCC 11635 / DSM 40517 / JCM 4748 / NBRC 13426 / NCIMB 8594 / NRRL 2338</strain>
    </source>
</reference>
<name>NUOK_SACEN</name>
<evidence type="ECO:0000255" key="1">
    <source>
        <dbReference type="HAMAP-Rule" id="MF_01456"/>
    </source>
</evidence>
<organism>
    <name type="scientific">Saccharopolyspora erythraea (strain ATCC 11635 / DSM 40517 / JCM 4748 / NBRC 13426 / NCIMB 8594 / NRRL 2338)</name>
    <dbReference type="NCBI Taxonomy" id="405948"/>
    <lineage>
        <taxon>Bacteria</taxon>
        <taxon>Bacillati</taxon>
        <taxon>Actinomycetota</taxon>
        <taxon>Actinomycetes</taxon>
        <taxon>Pseudonocardiales</taxon>
        <taxon>Pseudonocardiaceae</taxon>
        <taxon>Saccharopolyspora</taxon>
    </lineage>
</organism>
<gene>
    <name evidence="1" type="primary">nuoK</name>
    <name type="ordered locus">SACE_6892</name>
</gene>
<comment type="function">
    <text evidence="1">NDH-1 shuttles electrons from NADH, via FMN and iron-sulfur (Fe-S) centers, to quinones in the respiratory chain. The immediate electron acceptor for the enzyme in this species is believed to be a menaquinone. Couples the redox reaction to proton translocation (for every two electrons transferred, four hydrogen ions are translocated across the cytoplasmic membrane), and thus conserves the redox energy in a proton gradient.</text>
</comment>
<comment type="catalytic activity">
    <reaction evidence="1">
        <text>a quinone + NADH + 5 H(+)(in) = a quinol + NAD(+) + 4 H(+)(out)</text>
        <dbReference type="Rhea" id="RHEA:57888"/>
        <dbReference type="ChEBI" id="CHEBI:15378"/>
        <dbReference type="ChEBI" id="CHEBI:24646"/>
        <dbReference type="ChEBI" id="CHEBI:57540"/>
        <dbReference type="ChEBI" id="CHEBI:57945"/>
        <dbReference type="ChEBI" id="CHEBI:132124"/>
    </reaction>
</comment>
<comment type="subunit">
    <text evidence="1">NDH-1 is composed of 14 different subunits. Subunits NuoA, H, J, K, L, M, N constitute the membrane sector of the complex.</text>
</comment>
<comment type="subcellular location">
    <subcellularLocation>
        <location evidence="1">Cell membrane</location>
        <topology evidence="1">Multi-pass membrane protein</topology>
    </subcellularLocation>
</comment>
<comment type="similarity">
    <text evidence="1">Belongs to the complex I subunit 4L family.</text>
</comment>
<keyword id="KW-1003">Cell membrane</keyword>
<keyword id="KW-0472">Membrane</keyword>
<keyword id="KW-0520">NAD</keyword>
<keyword id="KW-0874">Quinone</keyword>
<keyword id="KW-1185">Reference proteome</keyword>
<keyword id="KW-1278">Translocase</keyword>
<keyword id="KW-0812">Transmembrane</keyword>
<keyword id="KW-1133">Transmembrane helix</keyword>
<keyword id="KW-0813">Transport</keyword>